<proteinExistence type="evidence at protein level"/>
<feature type="chain" id="PRO_0000058258" description="Pericentrin">
    <location>
        <begin position="1"/>
        <end position="2898"/>
    </location>
</feature>
<feature type="region of interest" description="Disordered" evidence="4">
    <location>
        <begin position="1"/>
        <end position="117"/>
    </location>
</feature>
<feature type="region of interest" description="Disordered" evidence="4">
    <location>
        <begin position="429"/>
        <end position="460"/>
    </location>
</feature>
<feature type="region of interest" description="Disordered" evidence="4">
    <location>
        <begin position="1745"/>
        <end position="1786"/>
    </location>
</feature>
<feature type="region of interest" description="Interaction with CDK5RAP2" evidence="7">
    <location>
        <begin position="1801"/>
        <end position="1822"/>
    </location>
</feature>
<feature type="region of interest" description="Disordered" evidence="4">
    <location>
        <begin position="1815"/>
        <end position="1880"/>
    </location>
</feature>
<feature type="region of interest" description="Disordered" evidence="4">
    <location>
        <begin position="1958"/>
        <end position="1979"/>
    </location>
</feature>
<feature type="region of interest" description="Disordered" evidence="4">
    <location>
        <begin position="2046"/>
        <end position="2088"/>
    </location>
</feature>
<feature type="region of interest" description="Disordered" evidence="4">
    <location>
        <begin position="2509"/>
        <end position="2532"/>
    </location>
</feature>
<feature type="region of interest" description="Interaction with NEK2" evidence="1">
    <location>
        <begin position="2545"/>
        <end position="2810"/>
    </location>
</feature>
<feature type="region of interest" description="Disordered" evidence="4">
    <location>
        <begin position="2653"/>
        <end position="2684"/>
    </location>
</feature>
<feature type="region of interest" description="Calmodulin-binding" evidence="1">
    <location>
        <begin position="2758"/>
        <end position="2771"/>
    </location>
</feature>
<feature type="region of interest" description="Disordered" evidence="4">
    <location>
        <begin position="2787"/>
        <end position="2898"/>
    </location>
</feature>
<feature type="coiled-coil region" evidence="3">
    <location>
        <begin position="127"/>
        <end position="343"/>
    </location>
</feature>
<feature type="coiled-coil region" evidence="3">
    <location>
        <begin position="382"/>
        <end position="434"/>
    </location>
</feature>
<feature type="coiled-coil region" evidence="3">
    <location>
        <begin position="468"/>
        <end position="527"/>
    </location>
</feature>
<feature type="coiled-coil region" evidence="3">
    <location>
        <begin position="611"/>
        <end position="696"/>
    </location>
</feature>
<feature type="coiled-coil region" evidence="3">
    <location>
        <begin position="727"/>
        <end position="787"/>
    </location>
</feature>
<feature type="coiled-coil region" evidence="3">
    <location>
        <begin position="872"/>
        <end position="939"/>
    </location>
</feature>
<feature type="coiled-coil region" evidence="3">
    <location>
        <begin position="1069"/>
        <end position="1383"/>
    </location>
</feature>
<feature type="coiled-coil region" evidence="3">
    <location>
        <begin position="1429"/>
        <end position="1482"/>
    </location>
</feature>
<feature type="coiled-coil region" evidence="3">
    <location>
        <begin position="1529"/>
        <end position="1593"/>
    </location>
</feature>
<feature type="coiled-coil region" evidence="3">
    <location>
        <begin position="2211"/>
        <end position="2403"/>
    </location>
</feature>
<feature type="coiled-coil region" evidence="3">
    <location>
        <begin position="2429"/>
        <end position="2590"/>
    </location>
</feature>
<feature type="compositionally biased region" description="Basic residues" evidence="4">
    <location>
        <begin position="34"/>
        <end position="44"/>
    </location>
</feature>
<feature type="compositionally biased region" description="Basic and acidic residues" evidence="4">
    <location>
        <begin position="448"/>
        <end position="457"/>
    </location>
</feature>
<feature type="compositionally biased region" description="Polar residues" evidence="4">
    <location>
        <begin position="1747"/>
        <end position="1766"/>
    </location>
</feature>
<feature type="compositionally biased region" description="Polar residues" evidence="4">
    <location>
        <begin position="1817"/>
        <end position="1834"/>
    </location>
</feature>
<feature type="compositionally biased region" description="Basic and acidic residues" evidence="4">
    <location>
        <begin position="1963"/>
        <end position="1976"/>
    </location>
</feature>
<feature type="compositionally biased region" description="Polar residues" evidence="4">
    <location>
        <begin position="2046"/>
        <end position="2055"/>
    </location>
</feature>
<feature type="compositionally biased region" description="Basic and acidic residues" evidence="4">
    <location>
        <begin position="2058"/>
        <end position="2068"/>
    </location>
</feature>
<feature type="compositionally biased region" description="Basic and acidic residues" evidence="4">
    <location>
        <begin position="2078"/>
        <end position="2088"/>
    </location>
</feature>
<feature type="compositionally biased region" description="Polar residues" evidence="4">
    <location>
        <begin position="2653"/>
        <end position="2671"/>
    </location>
</feature>
<feature type="compositionally biased region" description="Basic residues" evidence="4">
    <location>
        <begin position="2792"/>
        <end position="2802"/>
    </location>
</feature>
<feature type="compositionally biased region" description="Polar residues" evidence="4">
    <location>
        <begin position="2845"/>
        <end position="2860"/>
    </location>
</feature>
<feature type="compositionally biased region" description="Basic and acidic residues" evidence="4">
    <location>
        <begin position="2861"/>
        <end position="2874"/>
    </location>
</feature>
<feature type="modified residue" description="Phosphoserine" evidence="2">
    <location>
        <position position="44"/>
    </location>
</feature>
<feature type="modified residue" description="Phosphoserine" evidence="2">
    <location>
        <position position="1022"/>
    </location>
</feature>
<feature type="modified residue" description="Phosphoserine" evidence="11 12">
    <location>
        <position position="1437"/>
    </location>
</feature>
<feature type="modified residue" description="Phosphoserine" evidence="2">
    <location>
        <position position="1828"/>
    </location>
</feature>
<feature type="modified residue" description="Phosphoserine" evidence="12">
    <location>
        <position position="1859"/>
    </location>
</feature>
<feature type="modified residue" description="Phosphoserine" evidence="12">
    <location>
        <position position="1860"/>
    </location>
</feature>
<feature type="modified residue" description="Phosphoserine" evidence="2">
    <location>
        <position position="1959"/>
    </location>
</feature>
<feature type="modified residue" description="Phosphoserine" evidence="2">
    <location>
        <position position="1987"/>
    </location>
</feature>
<feature type="modified residue" description="Phosphoserine" evidence="2">
    <location>
        <position position="2128"/>
    </location>
</feature>
<feature type="modified residue" description="Phosphoserine" evidence="2">
    <location>
        <position position="2865"/>
    </location>
</feature>
<feature type="splice variant" id="VSP_038927" description="In isoform 2." evidence="8">
    <location>
        <begin position="1"/>
        <end position="916"/>
    </location>
</feature>
<feature type="splice variant" id="VSP_038928" description="In isoform 3." evidence="9">
    <original>ALSESQD</original>
    <variation>GNSRLLF</variation>
    <location>
        <begin position="2044"/>
        <end position="2050"/>
    </location>
</feature>
<feature type="splice variant" id="VSP_038929" description="In isoform 3." evidence="9">
    <location>
        <begin position="2501"/>
        <end position="2898"/>
    </location>
</feature>
<feature type="sequence conflict" description="In Ref. 1; AAA17886." evidence="10" ref="1">
    <location>
        <position position="652"/>
    </location>
</feature>
<feature type="sequence conflict" description="In Ref. 1; AAA17886." evidence="10" ref="1">
    <location>
        <position position="662"/>
    </location>
</feature>
<feature type="sequence conflict" description="In Ref. 1; AAA17886." evidence="10" ref="1">
    <original>EL</original>
    <variation>DV</variation>
    <location>
        <begin position="896"/>
        <end position="897"/>
    </location>
</feature>
<feature type="sequence conflict" description="In Ref. 1; AAA17886." evidence="10" ref="1">
    <original>R</original>
    <variation>G</variation>
    <location>
        <position position="960"/>
    </location>
</feature>
<feature type="sequence conflict" description="In Ref. 1; AAA17886." evidence="10" ref="1">
    <original>A</original>
    <variation>P</variation>
    <location>
        <position position="982"/>
    </location>
</feature>
<feature type="sequence conflict" description="In Ref. 1; AAA17886." evidence="10" ref="1">
    <original>S</original>
    <variation>R</variation>
    <location>
        <position position="1022"/>
    </location>
</feature>
<feature type="sequence conflict" description="In Ref. 1; AAA17886." evidence="10" ref="1">
    <original>Q</original>
    <variation>E</variation>
    <location>
        <position position="1150"/>
    </location>
</feature>
<feature type="sequence conflict" description="In Ref. 1; AAA17886." evidence="10" ref="1">
    <original>EH</original>
    <variation>DD</variation>
    <location>
        <begin position="1266"/>
        <end position="1267"/>
    </location>
</feature>
<feature type="sequence conflict" description="In Ref. 1; AAA17886." evidence="10" ref="1">
    <original>N</original>
    <variation>D</variation>
    <location>
        <position position="1533"/>
    </location>
</feature>
<feature type="sequence conflict" description="In Ref. 1; AAA17886." evidence="10" ref="1">
    <original>R</original>
    <variation>G</variation>
    <location>
        <position position="1548"/>
    </location>
</feature>
<feature type="sequence conflict" description="In Ref. 1; AAA17886." evidence="10" ref="1">
    <original>N</original>
    <variation>G</variation>
    <location>
        <position position="1726"/>
    </location>
</feature>
<feature type="sequence conflict" description="In Ref. 1; AAA17886." evidence="10" ref="1">
    <original>E</original>
    <variation>Q</variation>
    <location>
        <position position="1736"/>
    </location>
</feature>
<feature type="sequence conflict" description="In Ref. 1; AAA17886." evidence="10" ref="1">
    <original>C</original>
    <variation>S</variation>
    <location>
        <position position="1772"/>
    </location>
</feature>
<feature type="sequence conflict" description="In Ref. 1; AAA17886." evidence="10" ref="1">
    <original>H</original>
    <variation>L</variation>
    <location>
        <position position="2040"/>
    </location>
</feature>
<sequence>MEDEQEQRRRKVEAGRAKLANFRQRKTKGDCPNSKKKTAKRKGSAVHASVQEEGSVATPNSELPQGGAVFESPSCSNTLEGTRGASAAQEQEDCELDVTDLQGQQQTQPPPPQTAHSLELEALRLSLNNMHTAQLELTQANLQKEKETALTELREMLNGRRAQELALLQSRQQCELELLREQHAREKEEMALRSGQEAAELKEKLRSEMEKNAQTIETLKQDWESERELCLENLRQELSLKHQSEMEGLQSQFQKELSEQKVELEKIFQAKHEAEVSLKNLEAQHQAAIKKLQEDLQSEHCQYLQDLEQKFREKEKAKELELETLQASYEDLKAQSQEEIRLLWSQLESMKTNREELNGSWDPVLAQASHLEELEHLRSGFAQQQQQERAQHESELEHLRVYFEKKLKDAEKTYQEDLTVFQQRLQEAREDSLESTEISSSCVLPEETSGREGKEPPDPLDLQLGQPKVQESLVEDCQVKLSKAEEKIQQMKEEFQKKEAEWELSREELKREAEERLASMFLELREKAESEKLSIISRFEHRESSMRHLQDQQAAQILDLERSLMEQQGHLRQLEQELTRDDLLPCSQCGQEPAMAQEEKNGALLREKEDCALQLLMAQNRFLEERKEIMEKFAKEQDAFLRDAQEKHNHELQLLQQGHQQQLLALRMELETKHRSELTEQLASSESRRQALLETHVAELQVKHNAEISALEKRHLSNLDELESCYVADVQTIRDEHQQALELLRAELEEQLQKKESCHREMLTQELENLKRQHAEELQSVRDSLRMEMSAQHIENGKGPAADLQGAHQQDPAMALHNEGHLLVEDGDAVLRSVDAEGLLHQAGPQELGDAHTVEMQKSQAELAKPQELQASQDQVAQVRDKVFLLNRELEECRAELEQLQQRRERENQEGTTLICMLRADLELAQGEGKALRDALRRLLDLFGDTLKAAVTLKSRISERAGLLLDHEDAADTSDARLAAAALGDMWSDEGLLEIDRTLPEGAETSSVCEISSHVCESFFISPENTLDCEQPIRRVYQSLSTAVEGLLEMALDSSKQLEEARQLHRCVEREFRHRNEEMAQAMQKQQELLERLREESAAKDRLALELHTAKGLLEGFKVEKVDLQEALGKKEESEQQLILELEDLRKQLQQAARELLTLKEEKSVLWNQKETLTNEAKEREAALQEEVESLTRVQWESRKQSEKDRATLLSQMRVLESELEDQLVQHRGCAQLAEEVATLKQQLAALDKHLRSQRQFMDDQAAEREHEREEFQQEIQRLEGQLRQAARPRPPGPRDSQCVQLDEEVELLQEKLREKLDGFNELVIKKDFADQQLLIQEEEIKRLEETNASIQRQMVQLQEELEKQKKSMEELKEKEILKQENMGDLLLTTVSRSGLDEAGCPMLPQGSSSRGPEAQPDVTERALLQHENEVVHRRNSEIDELKSLIENLQENQRQLQKDKAEEIEQLHEVIEKLQSELSLMGPKVHEVSDPQAGSLHSELACLRGEGLGGQALRSELQAAQAAKEVFGQLLANQAHGHSQALEALQQRLQDAEEVAARHLAELEHCVALREAEVEAMASQIQEFAATLKAKEAIIEQRDLEIDAVNKWKVSHSLELEAILLALAHFRHALEQQTCATPDEPPELRQLRVQCARLSHQLQVLYRPFLKCRMQLDQHQPHVASIGCANPCADDELEQEGVSNRLALAPHSLAAQAKEELEDCPLGKANLMAQVRQLQEELDHRVHSVASRDTNSETCKLQQPNLSENGPRNHCCNGEESKPSPPDDVLNIAKTTWDVIDIIKNQDLLVQVEMPDFPTQEKLTSQGGPFSSQASGHSGSLLPEEAAEPQQDPVRALDLSSWSSPEVVRKDPSLEPQHSLPLTPGVGTVSLHSVDISPDWTDPLLQADVSGLLCYPGKSASGQAPLWAVAPSAGKHHAERTATEKDVEDFIVTSFDSQELLTSPSHELARRSDGSRKSDGPDIAMMLTLGSEGSETPTTDLVAAAAAAVPFSRRFVQSPGAMKEKEIHAKQMKALLQMVFDESHQILALSESQDPSSALNKGEPRDPLDGFPRDSQALSEVTTDKGEKESLETHLTWSEELLRAIQEVFAREQEKAELQPRPYGSNLGDYNSLVQRLEKVIQEQGDPQKVQDHLCLSDRSSLLAEIQALRAQLRMTHLQNQEKLQQLCAALTSTEARGSQREHQLRRQVELLAYKVEQEKCIANELQKTLSKEQETASDVRKRLVVEQNAVQDLKSELHACKQENTSLLESLDKVQQEVLRLRAVLDGKEKELKVVLEELESERGKGQALQAQQEEQQLRYLQREGQSSRALEELKLSLEKQLAQNNQLCVALKHERAAKDNLQKELQIEASRCEALLAQEKGQLSELQKSLEAERSRSLELSEALQHERLLTEQLSRNSQEACARQETQVQHALLRKLKAEKTRALELEAMLEKVQKQAAHTQQQLEAQAQERCVELRREKERELEIQRQRDEHKIEQLQRLVRELRWKEEVSGGNGPCRGSPGRGSLERDQFQEQQQELEKIRQQLLCAAGLLTSFTNHTVDRTIKDWTSSNEKAVSSLMRTLEELKSELSMPTSFQKKMTAELQVQLMNELLSDNDALTKAVGMATREKAELCRTVSRLEKTLKHHTQKGCVLNRQSKSSLKQDGTDLQSSLRHSDPEWHSQTTSGDTNTCNIKMEKLYLHYLRAESFRKALIYQKKYLLLLIGGFQDSEQETLSMIAHLGVFPSKADKKITMSRPFTKFRTAVRVVIAVLRLRFLVKKWQEVDRKGALVHPKSTRHGHRTSQRQRSPSGPRASLPTRDTSSGPTKASRHSPRSAAAGSPGKERSTSTPSSRLERSLTASQDPEHSLTEYIHHLEMIQQRLGGLPPDSTQKSCHQKIKQ</sequence>
<name>PCNT_MOUSE</name>
<dbReference type="EMBL" id="U05823">
    <property type="protein sequence ID" value="AAA17886.1"/>
    <property type="status" value="ALT_SEQ"/>
    <property type="molecule type" value="mRNA"/>
</dbReference>
<dbReference type="EMBL" id="AB207233">
    <property type="protein sequence ID" value="BAF36559.1"/>
    <property type="molecule type" value="mRNA"/>
</dbReference>
<dbReference type="EMBL" id="AB207234">
    <property type="protein sequence ID" value="BAF36560.1"/>
    <property type="molecule type" value="mRNA"/>
</dbReference>
<dbReference type="CCDS" id="CCDS88027.1">
    <molecule id="P48725-1"/>
</dbReference>
<dbReference type="PIR" id="A53188">
    <property type="entry name" value="A53188"/>
</dbReference>
<dbReference type="RefSeq" id="NP_001269921.1">
    <property type="nucleotide sequence ID" value="NM_001282992.1"/>
</dbReference>
<dbReference type="RefSeq" id="NP_032813.3">
    <property type="nucleotide sequence ID" value="NM_008787.3"/>
</dbReference>
<dbReference type="SMR" id="P48725"/>
<dbReference type="BioGRID" id="202052">
    <property type="interactions" value="8"/>
</dbReference>
<dbReference type="CORUM" id="P48725"/>
<dbReference type="FunCoup" id="P48725">
    <property type="interactions" value="896"/>
</dbReference>
<dbReference type="IntAct" id="P48725">
    <property type="interactions" value="3"/>
</dbReference>
<dbReference type="STRING" id="10090.ENSMUSP00000001179"/>
<dbReference type="GlyGen" id="P48725">
    <property type="glycosylation" value="1 site"/>
</dbReference>
<dbReference type="iPTMnet" id="P48725"/>
<dbReference type="PhosphoSitePlus" id="P48725"/>
<dbReference type="jPOST" id="P48725"/>
<dbReference type="PaxDb" id="10090-ENSMUSP00000001179"/>
<dbReference type="PeptideAtlas" id="P48725"/>
<dbReference type="ProteomicsDB" id="287893">
    <molecule id="P48725-1"/>
</dbReference>
<dbReference type="ProteomicsDB" id="287894">
    <molecule id="P48725-2"/>
</dbReference>
<dbReference type="ProteomicsDB" id="287895">
    <molecule id="P48725-3"/>
</dbReference>
<dbReference type="Pumba" id="P48725"/>
<dbReference type="GeneID" id="18541"/>
<dbReference type="KEGG" id="mmu:18541"/>
<dbReference type="UCSC" id="uc007fuj.1">
    <molecule id="P48725-1"/>
    <property type="organism name" value="mouse"/>
</dbReference>
<dbReference type="AGR" id="MGI:102722"/>
<dbReference type="CTD" id="5116"/>
<dbReference type="MGI" id="MGI:102722">
    <property type="gene designation" value="Pcnt"/>
</dbReference>
<dbReference type="eggNOG" id="ENOG502QV16">
    <property type="taxonomic scope" value="Eukaryota"/>
</dbReference>
<dbReference type="InParanoid" id="P48725"/>
<dbReference type="OrthoDB" id="2020852at2759"/>
<dbReference type="PhylomeDB" id="P48725"/>
<dbReference type="Reactome" id="R-MMU-2565942">
    <property type="pathway name" value="Regulation of PLK1 Activity at G2/M Transition"/>
</dbReference>
<dbReference type="Reactome" id="R-MMU-380259">
    <property type="pathway name" value="Loss of Nlp from mitotic centrosomes"/>
</dbReference>
<dbReference type="Reactome" id="R-MMU-380270">
    <property type="pathway name" value="Recruitment of mitotic centrosome proteins and complexes"/>
</dbReference>
<dbReference type="Reactome" id="R-MMU-380284">
    <property type="pathway name" value="Loss of proteins required for interphase microtubule organization from the centrosome"/>
</dbReference>
<dbReference type="Reactome" id="R-MMU-380320">
    <property type="pathway name" value="Recruitment of NuMA to mitotic centrosomes"/>
</dbReference>
<dbReference type="Reactome" id="R-MMU-5620912">
    <property type="pathway name" value="Anchoring of the basal body to the plasma membrane"/>
</dbReference>
<dbReference type="Reactome" id="R-MMU-8854518">
    <property type="pathway name" value="AURKA Activation by TPX2"/>
</dbReference>
<dbReference type="Reactome" id="R-MMU-9646399">
    <property type="pathway name" value="Aggrephagy"/>
</dbReference>
<dbReference type="BioGRID-ORCS" id="18541">
    <property type="hits" value="13 hits in 76 CRISPR screens"/>
</dbReference>
<dbReference type="CD-CODE" id="01CA17F3">
    <property type="entry name" value="Centrosome"/>
</dbReference>
<dbReference type="ChiTaRS" id="Pcnt">
    <property type="organism name" value="mouse"/>
</dbReference>
<dbReference type="PRO" id="PR:P48725"/>
<dbReference type="Proteomes" id="UP000000589">
    <property type="component" value="Unplaced"/>
</dbReference>
<dbReference type="RNAct" id="P48725">
    <property type="molecule type" value="protein"/>
</dbReference>
<dbReference type="GO" id="GO:0034451">
    <property type="term" value="C:centriolar satellite"/>
    <property type="evidence" value="ECO:0000250"/>
    <property type="project" value="UniProtKB"/>
</dbReference>
<dbReference type="GO" id="GO:0005814">
    <property type="term" value="C:centriole"/>
    <property type="evidence" value="ECO:0000314"/>
    <property type="project" value="MGI"/>
</dbReference>
<dbReference type="GO" id="GO:0005813">
    <property type="term" value="C:centrosome"/>
    <property type="evidence" value="ECO:0000314"/>
    <property type="project" value="MGI"/>
</dbReference>
<dbReference type="GO" id="GO:0036064">
    <property type="term" value="C:ciliary basal body"/>
    <property type="evidence" value="ECO:0000314"/>
    <property type="project" value="MGI"/>
</dbReference>
<dbReference type="GO" id="GO:0005929">
    <property type="term" value="C:cilium"/>
    <property type="evidence" value="ECO:0000304"/>
    <property type="project" value="Reactome"/>
</dbReference>
<dbReference type="GO" id="GO:0005801">
    <property type="term" value="C:cis-Golgi network"/>
    <property type="evidence" value="ECO:0000314"/>
    <property type="project" value="MGI"/>
</dbReference>
<dbReference type="GO" id="GO:0005829">
    <property type="term" value="C:cytosol"/>
    <property type="evidence" value="ECO:0000304"/>
    <property type="project" value="Reactome"/>
</dbReference>
<dbReference type="GO" id="GO:0045171">
    <property type="term" value="C:intercellular bridge"/>
    <property type="evidence" value="ECO:0000314"/>
    <property type="project" value="MGI"/>
</dbReference>
<dbReference type="GO" id="GO:0005874">
    <property type="term" value="C:microtubule"/>
    <property type="evidence" value="ECO:0007669"/>
    <property type="project" value="UniProtKB-KW"/>
</dbReference>
<dbReference type="GO" id="GO:0005815">
    <property type="term" value="C:microtubule organizing center"/>
    <property type="evidence" value="ECO:0000314"/>
    <property type="project" value="MGI"/>
</dbReference>
<dbReference type="GO" id="GO:0031514">
    <property type="term" value="C:motile cilium"/>
    <property type="evidence" value="ECO:0000314"/>
    <property type="project" value="MGI"/>
</dbReference>
<dbReference type="GO" id="GO:0000242">
    <property type="term" value="C:pericentriolar material"/>
    <property type="evidence" value="ECO:0000314"/>
    <property type="project" value="MGI"/>
</dbReference>
<dbReference type="GO" id="GO:0005516">
    <property type="term" value="F:calmodulin binding"/>
    <property type="evidence" value="ECO:0007669"/>
    <property type="project" value="UniProtKB-KW"/>
</dbReference>
<dbReference type="GO" id="GO:0060090">
    <property type="term" value="F:molecular adaptor activity"/>
    <property type="evidence" value="ECO:0007669"/>
    <property type="project" value="InterPro"/>
</dbReference>
<dbReference type="GO" id="GO:0048854">
    <property type="term" value="P:brain morphogenesis"/>
    <property type="evidence" value="ECO:0000315"/>
    <property type="project" value="MGI"/>
</dbReference>
<dbReference type="GO" id="GO:0043010">
    <property type="term" value="P:camera-type eye development"/>
    <property type="evidence" value="ECO:0000315"/>
    <property type="project" value="MGI"/>
</dbReference>
<dbReference type="GO" id="GO:0021696">
    <property type="term" value="P:cerebellar cortex morphogenesis"/>
    <property type="evidence" value="ECO:0000315"/>
    <property type="project" value="MGI"/>
</dbReference>
<dbReference type="GO" id="GO:0060271">
    <property type="term" value="P:cilium assembly"/>
    <property type="evidence" value="ECO:0000266"/>
    <property type="project" value="MGI"/>
</dbReference>
<dbReference type="GO" id="GO:1990403">
    <property type="term" value="P:embryonic brain development"/>
    <property type="evidence" value="ECO:0000315"/>
    <property type="project" value="MGI"/>
</dbReference>
<dbReference type="GO" id="GO:0035050">
    <property type="term" value="P:embryonic heart tube development"/>
    <property type="evidence" value="ECO:0000315"/>
    <property type="project" value="MGI"/>
</dbReference>
<dbReference type="GO" id="GO:0060322">
    <property type="term" value="P:head development"/>
    <property type="evidence" value="ECO:0000315"/>
    <property type="project" value="MGI"/>
</dbReference>
<dbReference type="GO" id="GO:0001701">
    <property type="term" value="P:in utero embryonic development"/>
    <property type="evidence" value="ECO:0000315"/>
    <property type="project" value="MGI"/>
</dbReference>
<dbReference type="GO" id="GO:0001822">
    <property type="term" value="P:kidney development"/>
    <property type="evidence" value="ECO:0000315"/>
    <property type="project" value="MGI"/>
</dbReference>
<dbReference type="GO" id="GO:0035108">
    <property type="term" value="P:limb morphogenesis"/>
    <property type="evidence" value="ECO:0000315"/>
    <property type="project" value="MGI"/>
</dbReference>
<dbReference type="GO" id="GO:0000226">
    <property type="term" value="P:microtubule cytoskeleton organization"/>
    <property type="evidence" value="ECO:0000250"/>
    <property type="project" value="UniProtKB"/>
</dbReference>
<dbReference type="GO" id="GO:0007052">
    <property type="term" value="P:mitotic spindle organization"/>
    <property type="evidence" value="ECO:0000315"/>
    <property type="project" value="MGI"/>
</dbReference>
<dbReference type="GO" id="GO:0035264">
    <property type="term" value="P:multicellular organism growth"/>
    <property type="evidence" value="ECO:0000315"/>
    <property type="project" value="MGI"/>
</dbReference>
<dbReference type="GO" id="GO:0043066">
    <property type="term" value="P:negative regulation of apoptotic process"/>
    <property type="evidence" value="ECO:0000315"/>
    <property type="project" value="MGI"/>
</dbReference>
<dbReference type="GO" id="GO:0061351">
    <property type="term" value="P:neural precursor cell proliferation"/>
    <property type="evidence" value="ECO:0000315"/>
    <property type="project" value="MGI"/>
</dbReference>
<dbReference type="GO" id="GO:0001764">
    <property type="term" value="P:neuron migration"/>
    <property type="evidence" value="ECO:0000315"/>
    <property type="project" value="MGI"/>
</dbReference>
<dbReference type="GO" id="GO:0021772">
    <property type="term" value="P:olfactory bulb development"/>
    <property type="evidence" value="ECO:0000315"/>
    <property type="project" value="MGI"/>
</dbReference>
<dbReference type="GO" id="GO:0090316">
    <property type="term" value="P:positive regulation of intracellular protein transport"/>
    <property type="evidence" value="ECO:0000250"/>
    <property type="project" value="UniProtKB"/>
</dbReference>
<dbReference type="GO" id="GO:0007165">
    <property type="term" value="P:signal transduction"/>
    <property type="evidence" value="ECO:0007669"/>
    <property type="project" value="InterPro"/>
</dbReference>
<dbReference type="GO" id="GO:0007051">
    <property type="term" value="P:spindle organization"/>
    <property type="evidence" value="ECO:0000314"/>
    <property type="project" value="MGI"/>
</dbReference>
<dbReference type="GO" id="GO:0001944">
    <property type="term" value="P:vasculature development"/>
    <property type="evidence" value="ECO:0000315"/>
    <property type="project" value="MGI"/>
</dbReference>
<dbReference type="InterPro" id="IPR028745">
    <property type="entry name" value="AKAP9/Pericentrin"/>
</dbReference>
<dbReference type="InterPro" id="IPR019528">
    <property type="entry name" value="PACT_domain"/>
</dbReference>
<dbReference type="PANTHER" id="PTHR44981:SF3">
    <property type="entry name" value="PERICENTRIN"/>
    <property type="match status" value="1"/>
</dbReference>
<dbReference type="PANTHER" id="PTHR44981">
    <property type="entry name" value="PERICENTRIN-LIKE PROTEIN, ISOFORM F"/>
    <property type="match status" value="1"/>
</dbReference>
<dbReference type="Pfam" id="PF10495">
    <property type="entry name" value="PACT_coil_coil"/>
    <property type="match status" value="1"/>
</dbReference>
<comment type="function">
    <text evidence="2 6">Integral component of the filamentous matrix of the centrosome involved in the initial establishment of organized microtubule arrays in both mitosis and meiosis. Plays a role, together with DISC1, in the microtubule network formation. Is an integral component of the pericentriolar material (PCM). May play an important role in preventing premature centrosome splitting during interphase by inhibiting NEK2 kinase activity at the centrosome.</text>
</comment>
<comment type="subunit">
    <text evidence="2 6 7">Interacts with DISC1 and PCM1. Binds calmodulin. Interacts with CEP131 (By similarity). Interacts with CDK5RAP2; the interaction is leading to centrosomal localization of PCNT and CDK5RAP2 (PubMed:20471352). Interacts with CHD3 (PubMed:17626165). Interacts with CHD4; the interaction regulates centrosome integrity (PubMed:17626165). Interacts with NEK2 (By similarity). Interacts with CCDC13 (By similarity). Interacts with CEP68 (By similarity). Interacts with ATF5; the ATF5:PCNT:polyglutamylated tubulin (PGT) tripartite unites the mother centriole and the pericentriolar material (PCM) in the centrosome (By similarity).</text>
</comment>
<comment type="interaction">
    <interactant intactId="EBI-2290976">
        <id>P48725</id>
    </interactant>
    <interactant intactId="EBI-1811999">
        <id>Q6A078</id>
        <label>Cep290</label>
    </interactant>
    <organismsDiffer>false</organismsDiffer>
    <experiments>2</experiments>
</comment>
<comment type="subcellular location">
    <subcellularLocation>
        <location evidence="2">Cytoplasm</location>
        <location evidence="2">Cytoskeleton</location>
        <location evidence="2">Microtubule organizing center</location>
        <location evidence="2">Centrosome</location>
    </subcellularLocation>
    <text evidence="2">Centrosomal at all stages of the cell cycle. Remains associated with centrosomes following microtubule depolymerization. Colocalized with DISC1 at the centrosome.</text>
</comment>
<comment type="alternative products">
    <event type="alternative splicing"/>
    <isoform>
        <id>P48725-1</id>
        <name>1</name>
        <name>Pericentrin B</name>
        <name>Pericentrin-360</name>
        <sequence type="displayed"/>
    </isoform>
    <isoform>
        <id>P48725-2</id>
        <name>2</name>
        <name>Pericentrin S</name>
        <name>Pericentrin-255</name>
        <sequence type="described" ref="VSP_038927"/>
    </isoform>
    <isoform>
        <id>P48725-3</id>
        <name>3</name>
        <sequence type="described" ref="VSP_038928 VSP_038929"/>
    </isoform>
</comment>
<comment type="tissue specificity">
    <text evidence="5">Expressed in heart and lung (at protein level). Expressed in kidney, thymus, liver, brain, muscle, testis, spleen, lung and heart.</text>
</comment>
<comment type="developmental stage">
    <text evidence="5 7">Expressed in embryo at 17 dpc (at protein level). Expressed in embryos at 7, 11, 15 and 17 dpc. Strongly expressed in brain tissues at early stages of development.</text>
</comment>
<comment type="domain">
    <text>Composed of a coiled-coil central region flanked by non-helical N- and C-terminals.</text>
</comment>
<comment type="PTM">
    <text evidence="2">Cleaved during mitotis which leads to removal of CDK5RAP2 from the centrosome and promotes centriole disengagement and subsequent centriole separation. The C-terminal fragment is rapidly degraded following cleavage.</text>
</comment>
<comment type="PTM">
    <text evidence="2">Ubiquitinated by TRIM43; leading to proteasomal degradation.</text>
</comment>
<comment type="sequence caution" evidence="10">
    <conflict type="erroneous termination">
        <sequence resource="EMBL-CDS" id="AAA17886"/>
    </conflict>
    <text>Truncated C-terminus.</text>
</comment>
<gene>
    <name type="primary">Pcnt</name>
    <name type="synonym">Pcnt2</name>
</gene>
<protein>
    <recommendedName>
        <fullName>Pericentrin</fullName>
    </recommendedName>
</protein>
<evidence type="ECO:0000250" key="1"/>
<evidence type="ECO:0000250" key="2">
    <source>
        <dbReference type="UniProtKB" id="O95613"/>
    </source>
</evidence>
<evidence type="ECO:0000255" key="3"/>
<evidence type="ECO:0000256" key="4">
    <source>
        <dbReference type="SAM" id="MobiDB-lite"/>
    </source>
</evidence>
<evidence type="ECO:0000269" key="5">
    <source>
    </source>
</evidence>
<evidence type="ECO:0000269" key="6">
    <source>
    </source>
</evidence>
<evidence type="ECO:0000269" key="7">
    <source>
    </source>
</evidence>
<evidence type="ECO:0000303" key="8">
    <source>
    </source>
</evidence>
<evidence type="ECO:0000303" key="9">
    <source>
    </source>
</evidence>
<evidence type="ECO:0000305" key="10"/>
<evidence type="ECO:0007744" key="11">
    <source>
    </source>
</evidence>
<evidence type="ECO:0007744" key="12">
    <source>
    </source>
</evidence>
<reference key="1">
    <citation type="journal article" date="1994" name="Cell">
        <title>Pericentrin, a highly conserved centrosome protein involved in microtubule organization.</title>
        <authorList>
            <person name="Doxsey S.J."/>
            <person name="Stein P."/>
            <person name="Evans L."/>
            <person name="Calarco P.D."/>
            <person name="Kirschner M."/>
        </authorList>
    </citation>
    <scope>NUCLEOTIDE SEQUENCE [MRNA] (ISOFORM 3)</scope>
</reference>
<reference key="2">
    <citation type="journal article" date="2006" name="Biochem. Biophys. Res. Commun.">
        <title>Characterization of pericentrin isoforms in vivo.</title>
        <authorList>
            <person name="Miyoshi K."/>
            <person name="Asanuma M."/>
            <person name="Miyazaki I."/>
            <person name="Matsuzaki S."/>
            <person name="Tohyama M."/>
            <person name="Ogawa N."/>
        </authorList>
    </citation>
    <scope>NUCLEOTIDE SEQUENCE [MRNA] (ISOFORMS 1 AND 2)</scope>
    <scope>TISSUE SPECIFICITY</scope>
    <scope>DEVELOPMENTAL STAGE</scope>
    <source>
        <tissue>Embryo</tissue>
    </source>
</reference>
<reference key="3">
    <citation type="journal article" date="2007" name="Mol. Biol. Cell">
        <title>Chromatin remodeling proteins interact with pericentrin to regulate centrosome integrity.</title>
        <authorList>
            <person name="Sillibourne J.E."/>
            <person name="Delaval B."/>
            <person name="Redick S."/>
            <person name="Sinha M."/>
            <person name="Doxsey S.J."/>
        </authorList>
    </citation>
    <scope>INTERACTION WITH CHD3 AND CHD4</scope>
    <scope>SUBCELLULAR LOCATION</scope>
    <scope>FUNCTION</scope>
</reference>
<reference key="4">
    <citation type="journal article" date="2009" name="Immunity">
        <title>The phagosomal proteome in interferon-gamma-activated macrophages.</title>
        <authorList>
            <person name="Trost M."/>
            <person name="English L."/>
            <person name="Lemieux S."/>
            <person name="Courcelles M."/>
            <person name="Desjardins M."/>
            <person name="Thibault P."/>
        </authorList>
    </citation>
    <scope>PHOSPHORYLATION [LARGE SCALE ANALYSIS] AT SER-1437</scope>
    <scope>IDENTIFICATION BY MASS SPECTROMETRY [LARGE SCALE ANALYSIS]</scope>
</reference>
<reference key="5">
    <citation type="journal article" date="2010" name="Cell">
        <title>A tissue-specific atlas of mouse protein phosphorylation and expression.</title>
        <authorList>
            <person name="Huttlin E.L."/>
            <person name="Jedrychowski M.P."/>
            <person name="Elias J.E."/>
            <person name="Goswami T."/>
            <person name="Rad R."/>
            <person name="Beausoleil S.A."/>
            <person name="Villen J."/>
            <person name="Haas W."/>
            <person name="Sowa M.E."/>
            <person name="Gygi S.P."/>
        </authorList>
    </citation>
    <scope>PHOSPHORYLATION [LARGE SCALE ANALYSIS] AT SER-1437; SER-1859 AND SER-1860</scope>
    <scope>IDENTIFICATION BY MASS SPECTROMETRY [LARGE SCALE ANALYSIS]</scope>
    <source>
        <tissue>Brown adipose tissue</tissue>
        <tissue>Kidney</tissue>
        <tissue>Liver</tissue>
        <tissue>Pancreas</tissue>
        <tissue>Spleen</tissue>
        <tissue>Testis</tissue>
    </source>
</reference>
<reference key="6">
    <citation type="journal article" date="2010" name="Neuron">
        <title>Cdk5rap2 interacts with pericentrin to maintain the neural progenitor pool in the developing neocortex.</title>
        <authorList>
            <person name="Buchman J.J."/>
            <person name="Tseng H.C."/>
            <person name="Zhou Y."/>
            <person name="Frank C.L."/>
            <person name="Xie Z."/>
            <person name="Tsai L.H."/>
        </authorList>
    </citation>
    <scope>INTERACTION WITH CDK5RAP2</scope>
    <scope>DEVELOPMENTAL STAGE</scope>
</reference>
<keyword id="KW-0025">Alternative splicing</keyword>
<keyword id="KW-0112">Calmodulin-binding</keyword>
<keyword id="KW-0175">Coiled coil</keyword>
<keyword id="KW-0963">Cytoplasm</keyword>
<keyword id="KW-0206">Cytoskeleton</keyword>
<keyword id="KW-0493">Microtubule</keyword>
<keyword id="KW-0597">Phosphoprotein</keyword>
<keyword id="KW-1185">Reference proteome</keyword>
<keyword id="KW-0832">Ubl conjugation</keyword>
<accession>P48725</accession>
<accession>A0JBT0</accession>
<accession>A0JBT1</accession>
<organism>
    <name type="scientific">Mus musculus</name>
    <name type="common">Mouse</name>
    <dbReference type="NCBI Taxonomy" id="10090"/>
    <lineage>
        <taxon>Eukaryota</taxon>
        <taxon>Metazoa</taxon>
        <taxon>Chordata</taxon>
        <taxon>Craniata</taxon>
        <taxon>Vertebrata</taxon>
        <taxon>Euteleostomi</taxon>
        <taxon>Mammalia</taxon>
        <taxon>Eutheria</taxon>
        <taxon>Euarchontoglires</taxon>
        <taxon>Glires</taxon>
        <taxon>Rodentia</taxon>
        <taxon>Myomorpha</taxon>
        <taxon>Muroidea</taxon>
        <taxon>Muridae</taxon>
        <taxon>Murinae</taxon>
        <taxon>Mus</taxon>
        <taxon>Mus</taxon>
    </lineage>
</organism>